<dbReference type="EMBL" id="CP000240">
    <property type="protein sequence ID" value="ABD01402.1"/>
    <property type="molecule type" value="Genomic_DNA"/>
</dbReference>
<dbReference type="RefSeq" id="WP_011432069.1">
    <property type="nucleotide sequence ID" value="NC_007776.1"/>
</dbReference>
<dbReference type="STRING" id="321332.CYB_0406"/>
<dbReference type="KEGG" id="cyb:CYB_0406"/>
<dbReference type="eggNOG" id="ENOG50330W8">
    <property type="taxonomic scope" value="Bacteria"/>
</dbReference>
<dbReference type="HOGENOM" id="CLU_145318_1_0_3"/>
<dbReference type="OrthoDB" id="9811868at2"/>
<dbReference type="Proteomes" id="UP000001938">
    <property type="component" value="Chromosome"/>
</dbReference>
<dbReference type="GO" id="GO:0009399">
    <property type="term" value="P:nitrogen fixation"/>
    <property type="evidence" value="ECO:0007669"/>
    <property type="project" value="UniProtKB-UniRule"/>
</dbReference>
<dbReference type="HAMAP" id="MF_00529">
    <property type="entry name" value="NifW"/>
    <property type="match status" value="1"/>
</dbReference>
<dbReference type="InterPro" id="IPR004893">
    <property type="entry name" value="NifW"/>
</dbReference>
<dbReference type="NCBIfam" id="NF010702">
    <property type="entry name" value="PRK14102.1"/>
    <property type="match status" value="1"/>
</dbReference>
<dbReference type="Pfam" id="PF03206">
    <property type="entry name" value="NifW"/>
    <property type="match status" value="1"/>
</dbReference>
<proteinExistence type="inferred from homology"/>
<comment type="function">
    <text evidence="1">May protect the nitrogenase Fe-Mo protein from oxidative damage.</text>
</comment>
<comment type="subunit">
    <text evidence="1">Homotrimer; associates with NifD.</text>
</comment>
<comment type="similarity">
    <text evidence="1">Belongs to the NifW family.</text>
</comment>
<name>NIFW_SYNJB</name>
<feature type="chain" id="PRO_0000265758" description="Nitrogenase-stabilizing/protective protein NifW">
    <location>
        <begin position="1"/>
        <end position="121"/>
    </location>
</feature>
<sequence length="121" mass="13964">MSWNHNRRWKDFQALVNAEDYFAFFELPYDPRVVNVNRLHILRKFAQYLAPLEHFQGSEEEWLEQARQALEKAYQTFLTSTPQQEKLFRVFQDYGCPDPVGGCAGCSSSGERGECSPGIPA</sequence>
<gene>
    <name evidence="1" type="primary">nifW</name>
    <name type="ordered locus">CYB_0406</name>
</gene>
<protein>
    <recommendedName>
        <fullName evidence="1">Nitrogenase-stabilizing/protective protein NifW</fullName>
    </recommendedName>
</protein>
<evidence type="ECO:0000255" key="1">
    <source>
        <dbReference type="HAMAP-Rule" id="MF_00529"/>
    </source>
</evidence>
<organism>
    <name type="scientific">Synechococcus sp. (strain JA-2-3B'a(2-13))</name>
    <name type="common">Cyanobacteria bacterium Yellowstone B-Prime</name>
    <dbReference type="NCBI Taxonomy" id="321332"/>
    <lineage>
        <taxon>Bacteria</taxon>
        <taxon>Bacillati</taxon>
        <taxon>Cyanobacteriota</taxon>
        <taxon>Cyanophyceae</taxon>
        <taxon>Synechococcales</taxon>
        <taxon>Synechococcaceae</taxon>
        <taxon>Synechococcus</taxon>
    </lineage>
</organism>
<accession>Q2JHN6</accession>
<reference key="1">
    <citation type="journal article" date="2007" name="ISME J.">
        <title>Population level functional diversity in a microbial community revealed by comparative genomic and metagenomic analyses.</title>
        <authorList>
            <person name="Bhaya D."/>
            <person name="Grossman A.R."/>
            <person name="Steunou A.-S."/>
            <person name="Khuri N."/>
            <person name="Cohan F.M."/>
            <person name="Hamamura N."/>
            <person name="Melendrez M.C."/>
            <person name="Bateson M.M."/>
            <person name="Ward D.M."/>
            <person name="Heidelberg J.F."/>
        </authorList>
    </citation>
    <scope>NUCLEOTIDE SEQUENCE [LARGE SCALE GENOMIC DNA]</scope>
    <source>
        <strain>JA-2-3B'a(2-13)</strain>
    </source>
</reference>
<keyword id="KW-0535">Nitrogen fixation</keyword>
<keyword id="KW-1185">Reference proteome</keyword>